<proteinExistence type="inferred from homology"/>
<feature type="transit peptide" description="Mitochondrion" evidence="2">
    <location>
        <begin position="1"/>
        <end position="21"/>
    </location>
</feature>
<feature type="chain" id="PRO_0000402266" description="Mitochondrial 15S rRNA processing factor CCM1" evidence="2">
    <location>
        <begin position="22"/>
        <end position="725"/>
    </location>
</feature>
<feature type="repeat" description="PPR 1" evidence="3">
    <location>
        <begin position="189"/>
        <end position="223"/>
    </location>
</feature>
<feature type="repeat" description="PPR 2" evidence="3">
    <location>
        <begin position="224"/>
        <end position="259"/>
    </location>
</feature>
<feature type="repeat" description="PPR 3" evidence="3">
    <location>
        <begin position="260"/>
        <end position="290"/>
    </location>
</feature>
<feature type="repeat" description="PPR 4" evidence="3">
    <location>
        <begin position="296"/>
        <end position="330"/>
    </location>
</feature>
<feature type="repeat" description="PPR 5" evidence="3">
    <location>
        <begin position="333"/>
        <end position="363"/>
    </location>
</feature>
<feature type="repeat" description="PPR 6" evidence="3">
    <location>
        <begin position="401"/>
        <end position="435"/>
    </location>
</feature>
<feature type="repeat" description="PPR 7" evidence="3">
    <location>
        <begin position="601"/>
        <end position="635"/>
    </location>
</feature>
<protein>
    <recommendedName>
        <fullName>Mitochondrial 15S rRNA processing factor CCM1</fullName>
    </recommendedName>
</protein>
<gene>
    <name type="primary">CCM1</name>
    <name type="ordered locus">PAS_chr3_1225</name>
</gene>
<comment type="function">
    <text evidence="1">Regulates mitochondrial small subunit maturation by controlling 15S rRNA 5'-end processing. Localizes to the 5' precursor of the 15S rRNA in a position that is subsequently occupied by mS47 in the mature yeast mtSSU. Uses structure and sequence-specific RNA recognition, binding to a single-stranded region of the precursor and specifically recognizing bases -6 to -1. The exchange of Ccm1 for mS47 is coupled to the irreversible removal of precursor rRNA that is accompanied by conformational changes of the mitoribosomal proteins uS5m and mS26. These conformational changes signal completion of 5'-end rRNA processing through protection of the mature 5'-end of the 15S rRNA and stabilization of mS47. The removal of the 5' precursor together with the dissociation of Ccm1 may be catalyzed by the 5'-3' exoribonuclease Pet127. Involved in the specific removal of group I introns in mitochondrial encoded transcripts.</text>
</comment>
<comment type="subunit">
    <text evidence="1">Binds to mitochondrial small subunit 15S rRNA.</text>
</comment>
<comment type="subcellular location">
    <subcellularLocation>
        <location evidence="1">Mitochondrion</location>
    </subcellularLocation>
</comment>
<comment type="miscellaneous">
    <text evidence="1">Involved in mitochondrial-nuclear incompatibility, a major determinant in reproductive isolation between species, through hybrid incompatibility of Ccm1 and its interacting partner 15S rRNA between yeast species.</text>
</comment>
<comment type="similarity">
    <text evidence="4">Belongs to the CCM1 family.</text>
</comment>
<dbReference type="EMBL" id="FN392321">
    <property type="protein sequence ID" value="CAY70883.1"/>
    <property type="molecule type" value="Genomic_DNA"/>
</dbReference>
<dbReference type="RefSeq" id="XP_002493062.1">
    <property type="nucleotide sequence ID" value="XM_002493017.1"/>
</dbReference>
<dbReference type="SMR" id="C4R5P7"/>
<dbReference type="FunCoup" id="C4R5P7">
    <property type="interactions" value="115"/>
</dbReference>
<dbReference type="STRING" id="644223.C4R5P7"/>
<dbReference type="EnsemblFungi" id="CAY70883">
    <property type="protein sequence ID" value="CAY70883"/>
    <property type="gene ID" value="PAS_chr3_1225"/>
</dbReference>
<dbReference type="GeneID" id="8200322"/>
<dbReference type="KEGG" id="ppa:PAS_chr3_1225"/>
<dbReference type="eggNOG" id="ENOG502QUX2">
    <property type="taxonomic scope" value="Eukaryota"/>
</dbReference>
<dbReference type="HOGENOM" id="CLU_019745_0_0_1"/>
<dbReference type="InParanoid" id="C4R5P7"/>
<dbReference type="OMA" id="ESSAIWA"/>
<dbReference type="OrthoDB" id="185373at2759"/>
<dbReference type="Proteomes" id="UP000000314">
    <property type="component" value="Chromosome 3"/>
</dbReference>
<dbReference type="GO" id="GO:0005739">
    <property type="term" value="C:mitochondrion"/>
    <property type="evidence" value="ECO:0007669"/>
    <property type="project" value="UniProtKB-SubCell"/>
</dbReference>
<dbReference type="GO" id="GO:0006397">
    <property type="term" value="P:mRNA processing"/>
    <property type="evidence" value="ECO:0007669"/>
    <property type="project" value="UniProtKB-KW"/>
</dbReference>
<dbReference type="GO" id="GO:0008380">
    <property type="term" value="P:RNA splicing"/>
    <property type="evidence" value="ECO:0007669"/>
    <property type="project" value="UniProtKB-KW"/>
</dbReference>
<dbReference type="Gene3D" id="1.25.40.10">
    <property type="entry name" value="Tetratricopeptide repeat domain"/>
    <property type="match status" value="2"/>
</dbReference>
<dbReference type="InterPro" id="IPR011990">
    <property type="entry name" value="TPR-like_helical_dom_sf"/>
</dbReference>
<dbReference type="PANTHER" id="PTHR46862:SF5">
    <property type="entry name" value="OS02G0170000 PROTEIN"/>
    <property type="match status" value="1"/>
</dbReference>
<dbReference type="PANTHER" id="PTHR46862">
    <property type="entry name" value="OS07G0661900 PROTEIN"/>
    <property type="match status" value="1"/>
</dbReference>
<organism>
    <name type="scientific">Komagataella phaffii (strain GS115 / ATCC 20864)</name>
    <name type="common">Yeast</name>
    <name type="synonym">Pichia pastoris</name>
    <dbReference type="NCBI Taxonomy" id="644223"/>
    <lineage>
        <taxon>Eukaryota</taxon>
        <taxon>Fungi</taxon>
        <taxon>Dikarya</taxon>
        <taxon>Ascomycota</taxon>
        <taxon>Saccharomycotina</taxon>
        <taxon>Pichiomycetes</taxon>
        <taxon>Pichiales</taxon>
        <taxon>Pichiaceae</taxon>
        <taxon>Komagataella</taxon>
    </lineage>
</organism>
<keyword id="KW-0496">Mitochondrion</keyword>
<keyword id="KW-0507">mRNA processing</keyword>
<keyword id="KW-0508">mRNA splicing</keyword>
<keyword id="KW-1185">Reference proteome</keyword>
<keyword id="KW-0677">Repeat</keyword>
<keyword id="KW-0809">Transit peptide</keyword>
<accession>C4R5P7</accession>
<evidence type="ECO:0000250" key="1">
    <source>
        <dbReference type="UniProtKB" id="P48237"/>
    </source>
</evidence>
<evidence type="ECO:0000255" key="2"/>
<evidence type="ECO:0000255" key="3">
    <source>
        <dbReference type="PROSITE-ProRule" id="PRU00708"/>
    </source>
</evidence>
<evidence type="ECO:0000305" key="4"/>
<reference key="1">
    <citation type="journal article" date="2009" name="Nat. Biotechnol.">
        <title>Genome sequence of the recombinant protein production host Pichia pastoris.</title>
        <authorList>
            <person name="De Schutter K."/>
            <person name="Lin Y.-C."/>
            <person name="Tiels P."/>
            <person name="Van Hecke A."/>
            <person name="Glinka S."/>
            <person name="Weber-Lehmann J."/>
            <person name="Rouze P."/>
            <person name="Van de Peer Y."/>
            <person name="Callewaert N."/>
        </authorList>
    </citation>
    <scope>NUCLEOTIDE SEQUENCE [LARGE SCALE GENOMIC DNA]</scope>
    <source>
        <strain>GS115 / ATCC 20864</strain>
    </source>
</reference>
<name>CCM1_KOMPG</name>
<sequence length="725" mass="84412">MRLSRIGTPKVSVTRVIPVRNVVIARRKPVRASNTDAKTWLMKEEQRRIRQKEQEMKQRLEELERFKTKVQKSYIRKEDRHLAQEIEKDLDIITDDYNLDSDVDLVFGELMQAEEQPKSLKSLPGASDASDNTDKSVELFSFPSPNLTLPEKVIHHIGPLVKHISNPENIQWGRLLLDLEKNQGFNGLSAVDVTRLIQNIPKEEKYQHMSLIHEMMFNSGISPDRYLTDLMMTAFSERSYYEPLVEALFQDYDINGWAPTDYTFGALIKVYSKGKKLDKINNLLNQMKLKYHKEPNKKIYTMVLQTCMKIDDYKKTSEVFDAMKFNSVATNPDTTAYGSMILMHVLNDNVEAALDLYDNLETEPDETILLALARGCSSRKVLINRGWDFIIEYYKRKFPLNEKLMTVMMYLTSRDGDLSLTRAIYNTIHESRFKMTESFSMNKNDGIALNVLLRGYFKYPDNHTVQSKTNDAVVALRRSTLALNHFGYHPKATPFLPVNELEEKHILPEVQAIWSYIILHYPDIVTSELVGTYLMILATRGSMADFNKAFEELTLKPVFEQVDNAVAVEEESEQSSELSDLRLTPLAIRLSSNIQIKYPRNHDIYHIALQACINNKDIELGQRIWQERGRFRKTPEFSMQPRNVKHNQDFEFARDMLKLLVNCNELNDACRLLLSTETQFNWEWTYVKPVYIMAEQLGDEYAKKVVRRVVRNKKSKWREEYLQGM</sequence>